<accession>Q5R5T8</accession>
<sequence>MEEDLFQLRQLPVVKFCRTGESARSEDDTASGEHEVQIEGVRVGLEAVELDDGAAVPKEFANPTDDTFMVEDAVEAIGFGKFQWKLSVLTGLAWMADAMEMMILSILAPQLHCEWRLPSWQVALLTSVVFVGMMSSSTLWGNISDQYGRKTGLKISVLWTLYYGILSAFAPVYSWILVLRGLVGFGIGGVPQSVTLYAEFLPMKARAKCILLIEVFWAIGTVFEVVLAVFVMPSLGWRWLLILSAVPLLLFAVLCFWLPESARYDVLSGNQEKAIATLKRIATENGAPMPLGKLIISRQEDRGKMRDLFTPHFRWTTLLLWFIWFSNAFSYYGLVLLTTELFQAGDVCGISSRKKAVEAKCSLACEYLSEEDYMDLLWTTLSEFPGVLVTLWIIDRLGRKKTMALCFVIFSFCSLLLFICVGRNVLTLLLFIARAFISGGFQAAYVYTPEVYPTATRALGLGTCSGMARVGALITPFIAQVMLESSVYLTLAVYSGCCLLAALASCFLPIETKGRGLQESSHREWGQEMVGRGMHGADVTRSNSGSQE</sequence>
<evidence type="ECO:0000250" key="1"/>
<evidence type="ECO:0000250" key="2">
    <source>
        <dbReference type="UniProtKB" id="Q8BFT9"/>
    </source>
</evidence>
<evidence type="ECO:0000255" key="3"/>
<evidence type="ECO:0000305" key="4"/>
<reference key="1">
    <citation type="submission" date="2004-11" db="EMBL/GenBank/DDBJ databases">
        <authorList>
            <consortium name="The German cDNA consortium"/>
        </authorList>
    </citation>
    <scope>NUCLEOTIDE SEQUENCE [LARGE SCALE MRNA]</scope>
    <source>
        <tissue>Brain cortex</tissue>
    </source>
</reference>
<keyword id="KW-0968">Cytoplasmic vesicle</keyword>
<keyword id="KW-0472">Membrane</keyword>
<keyword id="KW-0597">Phosphoprotein</keyword>
<keyword id="KW-1185">Reference proteome</keyword>
<keyword id="KW-0770">Synapse</keyword>
<keyword id="KW-0812">Transmembrane</keyword>
<keyword id="KW-1133">Transmembrane helix</keyword>
<keyword id="KW-0813">Transport</keyword>
<feature type="chain" id="PRO_0000279454" description="Synaptic vesicle 2-related protein">
    <location>
        <begin position="1"/>
        <end position="548"/>
    </location>
</feature>
<feature type="topological domain" description="Cytoplasmic" evidence="3">
    <location>
        <begin position="1"/>
        <end position="87"/>
    </location>
</feature>
<feature type="transmembrane region" description="Helical" evidence="3">
    <location>
        <begin position="88"/>
        <end position="108"/>
    </location>
</feature>
<feature type="topological domain" description="Vesicular" evidence="3">
    <location>
        <begin position="109"/>
        <end position="122"/>
    </location>
</feature>
<feature type="transmembrane region" description="Helical" evidence="3">
    <location>
        <begin position="123"/>
        <end position="143"/>
    </location>
</feature>
<feature type="topological domain" description="Cytoplasmic" evidence="3">
    <location>
        <begin position="144"/>
        <end position="156"/>
    </location>
</feature>
<feature type="transmembrane region" description="Helical" evidence="3">
    <location>
        <begin position="157"/>
        <end position="177"/>
    </location>
</feature>
<feature type="topological domain" description="Vesicular" evidence="3">
    <location>
        <begin position="178"/>
        <end position="180"/>
    </location>
</feature>
<feature type="transmembrane region" description="Helical" evidence="3">
    <location>
        <begin position="181"/>
        <end position="201"/>
    </location>
</feature>
<feature type="topological domain" description="Cytoplasmic" evidence="3">
    <location>
        <begin position="202"/>
        <end position="209"/>
    </location>
</feature>
<feature type="transmembrane region" description="Helical" evidence="3">
    <location>
        <begin position="210"/>
        <end position="230"/>
    </location>
</feature>
<feature type="topological domain" description="Vesicular" evidence="3">
    <location>
        <begin position="231"/>
        <end position="238"/>
    </location>
</feature>
<feature type="transmembrane region" description="Helical" evidence="3">
    <location>
        <begin position="239"/>
        <end position="259"/>
    </location>
</feature>
<feature type="topological domain" description="Cytoplasmic" evidence="3">
    <location>
        <begin position="260"/>
        <end position="316"/>
    </location>
</feature>
<feature type="transmembrane region" description="Helical" evidence="3">
    <location>
        <begin position="317"/>
        <end position="337"/>
    </location>
</feature>
<feature type="topological domain" description="Vesicular" evidence="3">
    <location>
        <begin position="338"/>
        <end position="373"/>
    </location>
</feature>
<feature type="transmembrane region" description="Helical" evidence="3">
    <location>
        <begin position="374"/>
        <end position="394"/>
    </location>
</feature>
<feature type="topological domain" description="Cytoplasmic" evidence="3">
    <location>
        <begin position="395"/>
        <end position="401"/>
    </location>
</feature>
<feature type="transmembrane region" description="Helical" evidence="3">
    <location>
        <begin position="402"/>
        <end position="422"/>
    </location>
</feature>
<feature type="topological domain" description="Vesicular" evidence="3">
    <location>
        <begin position="423"/>
        <end position="424"/>
    </location>
</feature>
<feature type="transmembrane region" description="Helical" evidence="3">
    <location>
        <begin position="425"/>
        <end position="445"/>
    </location>
</feature>
<feature type="topological domain" description="Cytoplasmic" evidence="3">
    <location>
        <begin position="446"/>
        <end position="457"/>
    </location>
</feature>
<feature type="transmembrane region" description="Helical" evidence="3">
    <location>
        <begin position="458"/>
        <end position="478"/>
    </location>
</feature>
<feature type="topological domain" description="Vesicular" evidence="3">
    <location>
        <begin position="479"/>
        <end position="489"/>
    </location>
</feature>
<feature type="transmembrane region" description="Helical" evidence="3">
    <location>
        <begin position="490"/>
        <end position="510"/>
    </location>
</feature>
<feature type="topological domain" description="Cytoplasmic" evidence="3">
    <location>
        <begin position="511"/>
        <end position="548"/>
    </location>
</feature>
<feature type="modified residue" description="Phosphoserine" evidence="2">
    <location>
        <position position="25"/>
    </location>
</feature>
<feature type="modified residue" description="Phosphoserine" evidence="2">
    <location>
        <position position="31"/>
    </location>
</feature>
<feature type="modified residue" description="Phosphoserine" evidence="2">
    <location>
        <position position="542"/>
    </location>
</feature>
<gene>
    <name type="primary">SVOP</name>
</gene>
<organism>
    <name type="scientific">Pongo abelii</name>
    <name type="common">Sumatran orangutan</name>
    <name type="synonym">Pongo pygmaeus abelii</name>
    <dbReference type="NCBI Taxonomy" id="9601"/>
    <lineage>
        <taxon>Eukaryota</taxon>
        <taxon>Metazoa</taxon>
        <taxon>Chordata</taxon>
        <taxon>Craniata</taxon>
        <taxon>Vertebrata</taxon>
        <taxon>Euteleostomi</taxon>
        <taxon>Mammalia</taxon>
        <taxon>Eutheria</taxon>
        <taxon>Euarchontoglires</taxon>
        <taxon>Primates</taxon>
        <taxon>Haplorrhini</taxon>
        <taxon>Catarrhini</taxon>
        <taxon>Hominidae</taxon>
        <taxon>Pongo</taxon>
    </lineage>
</organism>
<dbReference type="EMBL" id="CR860765">
    <property type="protein sequence ID" value="CAH92878.1"/>
    <property type="molecule type" value="mRNA"/>
</dbReference>
<dbReference type="RefSeq" id="NP_001126685.1">
    <property type="nucleotide sequence ID" value="NM_001133213.1"/>
</dbReference>
<dbReference type="SMR" id="Q5R5T8"/>
<dbReference type="FunCoup" id="Q5R5T8">
    <property type="interactions" value="34"/>
</dbReference>
<dbReference type="STRING" id="9601.ENSPPYP00000005619"/>
<dbReference type="GeneID" id="100173685"/>
<dbReference type="KEGG" id="pon:100173685"/>
<dbReference type="CTD" id="55530"/>
<dbReference type="eggNOG" id="KOG0253">
    <property type="taxonomic scope" value="Eukaryota"/>
</dbReference>
<dbReference type="HOGENOM" id="CLU_001265_46_0_1"/>
<dbReference type="InParanoid" id="Q5R5T8"/>
<dbReference type="OrthoDB" id="4139357at2759"/>
<dbReference type="Proteomes" id="UP000001595">
    <property type="component" value="Unplaced"/>
</dbReference>
<dbReference type="GO" id="GO:0009925">
    <property type="term" value="C:basal plasma membrane"/>
    <property type="evidence" value="ECO:0007669"/>
    <property type="project" value="UniProtKB-ARBA"/>
</dbReference>
<dbReference type="GO" id="GO:0030672">
    <property type="term" value="C:synaptic vesicle membrane"/>
    <property type="evidence" value="ECO:0007669"/>
    <property type="project" value="UniProtKB-SubCell"/>
</dbReference>
<dbReference type="GO" id="GO:0022857">
    <property type="term" value="F:transmembrane transporter activity"/>
    <property type="evidence" value="ECO:0007669"/>
    <property type="project" value="InterPro"/>
</dbReference>
<dbReference type="GO" id="GO:0042908">
    <property type="term" value="P:xenobiotic transport"/>
    <property type="evidence" value="ECO:0007669"/>
    <property type="project" value="UniProtKB-ARBA"/>
</dbReference>
<dbReference type="CDD" id="cd17441">
    <property type="entry name" value="MFS_SVOP"/>
    <property type="match status" value="1"/>
</dbReference>
<dbReference type="FunFam" id="1.20.1250.20:FF:000084">
    <property type="entry name" value="Synaptic vesicle 2-related protein"/>
    <property type="match status" value="1"/>
</dbReference>
<dbReference type="Gene3D" id="1.20.1250.20">
    <property type="entry name" value="MFS general substrate transporter like domains"/>
    <property type="match status" value="1"/>
</dbReference>
<dbReference type="InterPro" id="IPR011701">
    <property type="entry name" value="MFS"/>
</dbReference>
<dbReference type="InterPro" id="IPR020846">
    <property type="entry name" value="MFS_dom"/>
</dbReference>
<dbReference type="InterPro" id="IPR005828">
    <property type="entry name" value="MFS_sugar_transport-like"/>
</dbReference>
<dbReference type="InterPro" id="IPR036259">
    <property type="entry name" value="MFS_trans_sf"/>
</dbReference>
<dbReference type="InterPro" id="IPR004749">
    <property type="entry name" value="Orgcat_transp/SVOP"/>
</dbReference>
<dbReference type="InterPro" id="IPR047969">
    <property type="entry name" value="SVOP-like_MFS_dom"/>
</dbReference>
<dbReference type="NCBIfam" id="TIGR00898">
    <property type="entry name" value="2A0119"/>
    <property type="match status" value="1"/>
</dbReference>
<dbReference type="PANTHER" id="PTHR23511:SF5">
    <property type="entry name" value="MAJOR FACILITATOR-TYPE TRANSPORTER HXNZ-RELATED"/>
    <property type="match status" value="1"/>
</dbReference>
<dbReference type="PANTHER" id="PTHR23511">
    <property type="entry name" value="SYNAPTIC VESICLE GLYCOPROTEIN 2"/>
    <property type="match status" value="1"/>
</dbReference>
<dbReference type="Pfam" id="PF07690">
    <property type="entry name" value="MFS_1"/>
    <property type="match status" value="1"/>
</dbReference>
<dbReference type="Pfam" id="PF00083">
    <property type="entry name" value="Sugar_tr"/>
    <property type="match status" value="1"/>
</dbReference>
<dbReference type="SUPFAM" id="SSF103473">
    <property type="entry name" value="MFS general substrate transporter"/>
    <property type="match status" value="1"/>
</dbReference>
<dbReference type="PROSITE" id="PS50850">
    <property type="entry name" value="MFS"/>
    <property type="match status" value="1"/>
</dbReference>
<name>SVOP_PONAB</name>
<protein>
    <recommendedName>
        <fullName>Synaptic vesicle 2-related protein</fullName>
        <shortName>SV2-related protein</shortName>
    </recommendedName>
</protein>
<proteinExistence type="evidence at transcript level"/>
<comment type="subcellular location">
    <subcellularLocation>
        <location evidence="1">Cytoplasmic vesicle</location>
        <location evidence="1">Secretory vesicle</location>
        <location evidence="1">Synaptic vesicle membrane</location>
        <topology evidence="1">Multi-pass membrane protein</topology>
    </subcellularLocation>
</comment>
<comment type="similarity">
    <text evidence="4">Belongs to the major facilitator superfamily.</text>
</comment>